<comment type="function">
    <text evidence="2 3 6 8">Beta subunit of voltage-dependent calcium channels which contributes to the function of the calcium channel by increasing peak calcium current (PubMed:14674701, PubMed:36424916). Plays a role in shifting voltage dependencies of activation and inactivation of the channel (By similarity). May modulate G protein inhibition (By similarity). May contribute to beta-adrenergic augmentation of Ca(2+) influx in cardiomyocytes, thereby regulating increases in heart rate and contractile force (PubMed:36424916). Involved in membrane targeting of the alpha-1 subunit CACNA1C (By similarity).</text>
</comment>
<comment type="subunit">
    <text evidence="2 3 7">Component of a calcium channel complex consisting of a pore-forming alpha subunit (CACNA1S) and the ancillary subunits CACNB1 or CACNB2, CACNG1 and CACNA2D1 (By similarity). The channel complex contains alpha, beta, gamma and delta subunits in a 1:1:1:1 ratio, i.e. it contains either CACNB1 or CACNB2 (By similarity). Interacts with CACNA1C (By similarity). Interacts with RRAD; interaction may be involved in beta-adrenergic regulation of heart rate and contractile force (PubMed:36424916). Interaction with RRAD regulates the trafficking of CACNA1C to the cell membrane (By similarity). Interacts with TMIGD2 (By similarity). Interacts with CAMK2D (By similarity). Interacts with CBARP (PubMed:24751537). Interacts with CAMK2A (By similarity).</text>
</comment>
<comment type="subcellular location">
    <subcellularLocation>
        <location evidence="1">Cell membrane</location>
        <location evidence="1">Sarcolemma</location>
        <topology evidence="1">Peripheral membrane protein</topology>
        <orientation evidence="1">Cytoplasmic side</orientation>
    </subcellularLocation>
</comment>
<comment type="alternative products">
    <event type="alternative splicing"/>
    <isoform>
        <id>Q8CC27-1</id>
        <name>1</name>
        <sequence type="displayed"/>
    </isoform>
    <isoform>
        <id>Q8CC27-2</id>
        <name>2</name>
        <sequence type="described" ref="VSP_010730"/>
    </isoform>
    <isoform>
        <id>Q8CC27-3</id>
        <name>3</name>
        <name>Beta-2g</name>
        <sequence type="described" ref="VSP_010731"/>
    </isoform>
    <isoform>
        <id>Q8CC27-4</id>
        <name>4</name>
        <sequence type="described" ref="VSP_010731 VSP_010732"/>
    </isoform>
</comment>
<comment type="PTM">
    <text evidence="1">Regulated through phosphorylation at Thr-549 by CaMK2D.</text>
</comment>
<comment type="similarity">
    <text evidence="10">Belongs to the calcium channel beta subunit family.</text>
</comment>
<accession>Q8CC27</accession>
<accession>A2ASJ8</accession>
<accession>Q8C5J5</accession>
<accession>Q9CTQ6</accession>
<reference key="1">
    <citation type="journal article" date="2003" name="Mol. Cell. Biochem.">
        <title>Genetic characterization of a new splice variant of the beta2 subunit of the voltage-dependent calcium channel.</title>
        <authorList>
            <person name="Murakami M."/>
            <person name="Aoyama M."/>
            <person name="Suzuki T."/>
            <person name="Sasano H."/>
            <person name="Nakayama S."/>
            <person name="Iijima T."/>
        </authorList>
    </citation>
    <scope>NUCLEOTIDE SEQUENCE (ISOFORM 3)</scope>
    <scope>FUNCTION</scope>
    <source>
        <tissue>Heart</tissue>
    </source>
</reference>
<reference key="2">
    <citation type="journal article" date="2005" name="Science">
        <title>The transcriptional landscape of the mammalian genome.</title>
        <authorList>
            <person name="Carninci P."/>
            <person name="Kasukawa T."/>
            <person name="Katayama S."/>
            <person name="Gough J."/>
            <person name="Frith M.C."/>
            <person name="Maeda N."/>
            <person name="Oyama R."/>
            <person name="Ravasi T."/>
            <person name="Lenhard B."/>
            <person name="Wells C."/>
            <person name="Kodzius R."/>
            <person name="Shimokawa K."/>
            <person name="Bajic V.B."/>
            <person name="Brenner S.E."/>
            <person name="Batalov S."/>
            <person name="Forrest A.R."/>
            <person name="Zavolan M."/>
            <person name="Davis M.J."/>
            <person name="Wilming L.G."/>
            <person name="Aidinis V."/>
            <person name="Allen J.E."/>
            <person name="Ambesi-Impiombato A."/>
            <person name="Apweiler R."/>
            <person name="Aturaliya R.N."/>
            <person name="Bailey T.L."/>
            <person name="Bansal M."/>
            <person name="Baxter L."/>
            <person name="Beisel K.W."/>
            <person name="Bersano T."/>
            <person name="Bono H."/>
            <person name="Chalk A.M."/>
            <person name="Chiu K.P."/>
            <person name="Choudhary V."/>
            <person name="Christoffels A."/>
            <person name="Clutterbuck D.R."/>
            <person name="Crowe M.L."/>
            <person name="Dalla E."/>
            <person name="Dalrymple B.P."/>
            <person name="de Bono B."/>
            <person name="Della Gatta G."/>
            <person name="di Bernardo D."/>
            <person name="Down T."/>
            <person name="Engstrom P."/>
            <person name="Fagiolini M."/>
            <person name="Faulkner G."/>
            <person name="Fletcher C.F."/>
            <person name="Fukushima T."/>
            <person name="Furuno M."/>
            <person name="Futaki S."/>
            <person name="Gariboldi M."/>
            <person name="Georgii-Hemming P."/>
            <person name="Gingeras T.R."/>
            <person name="Gojobori T."/>
            <person name="Green R.E."/>
            <person name="Gustincich S."/>
            <person name="Harbers M."/>
            <person name="Hayashi Y."/>
            <person name="Hensch T.K."/>
            <person name="Hirokawa N."/>
            <person name="Hill D."/>
            <person name="Huminiecki L."/>
            <person name="Iacono M."/>
            <person name="Ikeo K."/>
            <person name="Iwama A."/>
            <person name="Ishikawa T."/>
            <person name="Jakt M."/>
            <person name="Kanapin A."/>
            <person name="Katoh M."/>
            <person name="Kawasawa Y."/>
            <person name="Kelso J."/>
            <person name="Kitamura H."/>
            <person name="Kitano H."/>
            <person name="Kollias G."/>
            <person name="Krishnan S.P."/>
            <person name="Kruger A."/>
            <person name="Kummerfeld S.K."/>
            <person name="Kurochkin I.V."/>
            <person name="Lareau L.F."/>
            <person name="Lazarevic D."/>
            <person name="Lipovich L."/>
            <person name="Liu J."/>
            <person name="Liuni S."/>
            <person name="McWilliam S."/>
            <person name="Madan Babu M."/>
            <person name="Madera M."/>
            <person name="Marchionni L."/>
            <person name="Matsuda H."/>
            <person name="Matsuzawa S."/>
            <person name="Miki H."/>
            <person name="Mignone F."/>
            <person name="Miyake S."/>
            <person name="Morris K."/>
            <person name="Mottagui-Tabar S."/>
            <person name="Mulder N."/>
            <person name="Nakano N."/>
            <person name="Nakauchi H."/>
            <person name="Ng P."/>
            <person name="Nilsson R."/>
            <person name="Nishiguchi S."/>
            <person name="Nishikawa S."/>
            <person name="Nori F."/>
            <person name="Ohara O."/>
            <person name="Okazaki Y."/>
            <person name="Orlando V."/>
            <person name="Pang K.C."/>
            <person name="Pavan W.J."/>
            <person name="Pavesi G."/>
            <person name="Pesole G."/>
            <person name="Petrovsky N."/>
            <person name="Piazza S."/>
            <person name="Reed J."/>
            <person name="Reid J.F."/>
            <person name="Ring B.Z."/>
            <person name="Ringwald M."/>
            <person name="Rost B."/>
            <person name="Ruan Y."/>
            <person name="Salzberg S.L."/>
            <person name="Sandelin A."/>
            <person name="Schneider C."/>
            <person name="Schoenbach C."/>
            <person name="Sekiguchi K."/>
            <person name="Semple C.A."/>
            <person name="Seno S."/>
            <person name="Sessa L."/>
            <person name="Sheng Y."/>
            <person name="Shibata Y."/>
            <person name="Shimada H."/>
            <person name="Shimada K."/>
            <person name="Silva D."/>
            <person name="Sinclair B."/>
            <person name="Sperling S."/>
            <person name="Stupka E."/>
            <person name="Sugiura K."/>
            <person name="Sultana R."/>
            <person name="Takenaka Y."/>
            <person name="Taki K."/>
            <person name="Tammoja K."/>
            <person name="Tan S.L."/>
            <person name="Tang S."/>
            <person name="Taylor M.S."/>
            <person name="Tegner J."/>
            <person name="Teichmann S.A."/>
            <person name="Ueda H.R."/>
            <person name="van Nimwegen E."/>
            <person name="Verardo R."/>
            <person name="Wei C.L."/>
            <person name="Yagi K."/>
            <person name="Yamanishi H."/>
            <person name="Zabarovsky E."/>
            <person name="Zhu S."/>
            <person name="Zimmer A."/>
            <person name="Hide W."/>
            <person name="Bult C."/>
            <person name="Grimmond S.M."/>
            <person name="Teasdale R.D."/>
            <person name="Liu E.T."/>
            <person name="Brusic V."/>
            <person name="Quackenbush J."/>
            <person name="Wahlestedt C."/>
            <person name="Mattick J.S."/>
            <person name="Hume D.A."/>
            <person name="Kai C."/>
            <person name="Sasaki D."/>
            <person name="Tomaru Y."/>
            <person name="Fukuda S."/>
            <person name="Kanamori-Katayama M."/>
            <person name="Suzuki M."/>
            <person name="Aoki J."/>
            <person name="Arakawa T."/>
            <person name="Iida J."/>
            <person name="Imamura K."/>
            <person name="Itoh M."/>
            <person name="Kato T."/>
            <person name="Kawaji H."/>
            <person name="Kawagashira N."/>
            <person name="Kawashima T."/>
            <person name="Kojima M."/>
            <person name="Kondo S."/>
            <person name="Konno H."/>
            <person name="Nakano K."/>
            <person name="Ninomiya N."/>
            <person name="Nishio T."/>
            <person name="Okada M."/>
            <person name="Plessy C."/>
            <person name="Shibata K."/>
            <person name="Shiraki T."/>
            <person name="Suzuki S."/>
            <person name="Tagami M."/>
            <person name="Waki K."/>
            <person name="Watahiki A."/>
            <person name="Okamura-Oho Y."/>
            <person name="Suzuki H."/>
            <person name="Kawai J."/>
            <person name="Hayashizaki Y."/>
        </authorList>
    </citation>
    <scope>NUCLEOTIDE SEQUENCE [LARGE SCALE MRNA] (ISOFORMS 1; 2; 3 AND 4)</scope>
    <source>
        <strain>C57BL/6J</strain>
        <tissue>Diencephalon</tissue>
        <tissue>Olfactory bulb</tissue>
        <tissue>Retina</tissue>
    </source>
</reference>
<reference key="3">
    <citation type="journal article" date="2009" name="PLoS Biol.">
        <title>Lineage-specific biology revealed by a finished genome assembly of the mouse.</title>
        <authorList>
            <person name="Church D.M."/>
            <person name="Goodstadt L."/>
            <person name="Hillier L.W."/>
            <person name="Zody M.C."/>
            <person name="Goldstein S."/>
            <person name="She X."/>
            <person name="Bult C.J."/>
            <person name="Agarwala R."/>
            <person name="Cherry J.L."/>
            <person name="DiCuccio M."/>
            <person name="Hlavina W."/>
            <person name="Kapustin Y."/>
            <person name="Meric P."/>
            <person name="Maglott D."/>
            <person name="Birtle Z."/>
            <person name="Marques A.C."/>
            <person name="Graves T."/>
            <person name="Zhou S."/>
            <person name="Teague B."/>
            <person name="Potamousis K."/>
            <person name="Churas C."/>
            <person name="Place M."/>
            <person name="Herschleb J."/>
            <person name="Runnheim R."/>
            <person name="Forrest D."/>
            <person name="Amos-Landgraf J."/>
            <person name="Schwartz D.C."/>
            <person name="Cheng Z."/>
            <person name="Lindblad-Toh K."/>
            <person name="Eichler E.E."/>
            <person name="Ponting C.P."/>
        </authorList>
    </citation>
    <scope>NUCLEOTIDE SEQUENCE [LARGE SCALE GENOMIC DNA]</scope>
    <source>
        <strain>C57BL/6J</strain>
    </source>
</reference>
<reference key="4">
    <citation type="journal article" date="2010" name="Cell">
        <title>A tissue-specific atlas of mouse protein phosphorylation and expression.</title>
        <authorList>
            <person name="Huttlin E.L."/>
            <person name="Jedrychowski M.P."/>
            <person name="Elias J.E."/>
            <person name="Goswami T."/>
            <person name="Rad R."/>
            <person name="Beausoleil S.A."/>
            <person name="Villen J."/>
            <person name="Haas W."/>
            <person name="Sowa M.E."/>
            <person name="Gygi S.P."/>
        </authorList>
    </citation>
    <scope>PHOSPHORYLATION [LARGE SCALE ANALYSIS] AT SER-203; SER-214; SER-545 AND THR-549</scope>
    <scope>IDENTIFICATION BY MASS SPECTROMETRY [LARGE SCALE ANALYSIS]</scope>
    <source>
        <tissue>Heart</tissue>
    </source>
</reference>
<reference key="5">
    <citation type="journal article" date="2014" name="J. Cell Biol.">
        <title>BARP suppresses voltage-gated calcium channel activity and Ca2+-evoked exocytosis.</title>
        <authorList>
            <person name="Beguin P."/>
            <person name="Nagashima K."/>
            <person name="Mahalakshmi R.N."/>
            <person name="Vigot R."/>
            <person name="Matsunaga A."/>
            <person name="Miki T."/>
            <person name="Ng M.Y."/>
            <person name="Ng Y.J."/>
            <person name="Lim C.H."/>
            <person name="Tay H.S."/>
            <person name="Hwang L.A."/>
            <person name="Firsov D."/>
            <person name="Tang B.L."/>
            <person name="Inagaki N."/>
            <person name="Mori Y."/>
            <person name="Seino S."/>
            <person name="Launey T."/>
            <person name="Hunziker W."/>
        </authorList>
    </citation>
    <scope>INTERACTION WITH CBARP</scope>
</reference>
<reference key="6">
    <citation type="journal article" date="2022" name="Nat. Cardiovasc. Res.">
        <title>Rad regulation of CaV1.2 channels controls cardiac fight-or-flight response.</title>
        <authorList>
            <person name="Papa A."/>
            <person name="Zakharov S.I."/>
            <person name="Katchman A.N."/>
            <person name="Kushner J.S."/>
            <person name="Chen B.X."/>
            <person name="Yang L."/>
            <person name="Liu G."/>
            <person name="Jimenez A.S."/>
            <person name="Eisert R.J."/>
            <person name="Bradshaw G.A."/>
            <person name="Dun W."/>
            <person name="Ali S.R."/>
            <person name="Rodriques A."/>
            <person name="Zhou K."/>
            <person name="Topkara V."/>
            <person name="Yang M."/>
            <person name="Morrow J.P."/>
            <person name="Tsai E.J."/>
            <person name="Karlin A."/>
            <person name="Wan E."/>
            <person name="Kalocsay M."/>
            <person name="Pitt G.S."/>
            <person name="Colecraft H.M."/>
            <person name="Ben-Johny M."/>
            <person name="Marx S.O."/>
        </authorList>
    </citation>
    <scope>FUNCTION</scope>
    <scope>INTERACTION WITH RRAD</scope>
    <scope>MUTAGENESIS OF 370-ASP--ASP-372</scope>
</reference>
<feature type="chain" id="PRO_0000144052" description="Voltage-dependent L-type calcium channel subunit beta-2">
    <location>
        <begin position="1"/>
        <end position="655"/>
    </location>
</feature>
<feature type="domain" description="SH3" evidence="4">
    <location>
        <begin position="110"/>
        <end position="179"/>
    </location>
</feature>
<feature type="region of interest" description="Disordered" evidence="5">
    <location>
        <begin position="1"/>
        <end position="21"/>
    </location>
</feature>
<feature type="region of interest" description="Disordered" evidence="5">
    <location>
        <begin position="35"/>
        <end position="97"/>
    </location>
</feature>
<feature type="region of interest" description="Disordered" evidence="5">
    <location>
        <begin position="186"/>
        <end position="257"/>
    </location>
</feature>
<feature type="region of interest" description="Disordered" evidence="5">
    <location>
        <begin position="483"/>
        <end position="631"/>
    </location>
</feature>
<feature type="compositionally biased region" description="Low complexity" evidence="5">
    <location>
        <begin position="51"/>
        <end position="61"/>
    </location>
</feature>
<feature type="compositionally biased region" description="Polar residues" evidence="5">
    <location>
        <begin position="62"/>
        <end position="81"/>
    </location>
</feature>
<feature type="compositionally biased region" description="Low complexity" evidence="5">
    <location>
        <begin position="193"/>
        <end position="205"/>
    </location>
</feature>
<feature type="compositionally biased region" description="Low complexity" evidence="5">
    <location>
        <begin position="483"/>
        <end position="492"/>
    </location>
</feature>
<feature type="compositionally biased region" description="Basic and acidic residues" evidence="5">
    <location>
        <begin position="555"/>
        <end position="590"/>
    </location>
</feature>
<feature type="compositionally biased region" description="Basic residues" evidence="5">
    <location>
        <begin position="593"/>
        <end position="604"/>
    </location>
</feature>
<feature type="compositionally biased region" description="Basic and acidic residues" evidence="5">
    <location>
        <begin position="605"/>
        <end position="618"/>
    </location>
</feature>
<feature type="site" description="Required for CaMK2D-binding" evidence="1">
    <location>
        <position position="544"/>
    </location>
</feature>
<feature type="modified residue" description="Phosphoserine" evidence="3">
    <location>
        <position position="200"/>
    </location>
</feature>
<feature type="modified residue" description="Phosphoserine" evidence="11">
    <location>
        <position position="203"/>
    </location>
</feature>
<feature type="modified residue" description="Phosphoserine" evidence="11">
    <location>
        <position position="214"/>
    </location>
</feature>
<feature type="modified residue" description="Phosphoserine" evidence="11">
    <location>
        <position position="545"/>
    </location>
</feature>
<feature type="modified residue" description="Phosphothreonine" evidence="11">
    <location>
        <position position="549"/>
    </location>
</feature>
<feature type="splice variant" id="VSP_010730" description="In isoform 2." evidence="9">
    <original>MVQSDTSKSPPVAAVAQESQMELLESAAPAGALGAQSYGKGARRKNRFKGSDGSTSSDTTSNSFVRQ</original>
    <variation>MQCCGLVHRRRVRVSY</variation>
    <location>
        <begin position="1"/>
        <end position="67"/>
    </location>
</feature>
<feature type="splice variant" id="VSP_010731" description="In isoform 3 and isoform 4." evidence="9">
    <original>MVQSDTSKSPPVAAVAQESQMELLESAAPAGALGAQSYGKGARRKNRFKGSDGSTSSDTTSNSFVRQ</original>
    <variation>MKATWIRLLKRAKGGRLKSSDIC</variation>
    <location>
        <begin position="1"/>
        <end position="67"/>
    </location>
</feature>
<feature type="splice variant" id="VSP_010732" description="In isoform 4." evidence="9">
    <original>IDIDATGLDAEENDIPANHRSPKPSANSVTSPHSKEKRMPFFKK</original>
    <variation>KQKQKS</variation>
    <location>
        <begin position="221"/>
        <end position="264"/>
    </location>
</feature>
<feature type="mutagenesis site" description="Reduces binding to RRAD." evidence="8">
    <original>DAD</original>
    <variation>AAA</variation>
    <location>
        <begin position="370"/>
        <end position="372"/>
    </location>
</feature>
<feature type="sequence conflict" description="In Ref. 1; BAD01474." evidence="10" ref="1">
    <original>A</original>
    <variation>R</variation>
    <location>
        <position position="124"/>
    </location>
</feature>
<protein>
    <recommendedName>
        <fullName>Voltage-dependent L-type calcium channel subunit beta-2</fullName>
        <shortName>CAB2</shortName>
    </recommendedName>
    <alternativeName>
        <fullName>Calcium channel voltage-dependent subunit beta 2</fullName>
    </alternativeName>
</protein>
<keyword id="KW-0025">Alternative splicing</keyword>
<keyword id="KW-0106">Calcium</keyword>
<keyword id="KW-0107">Calcium channel</keyword>
<keyword id="KW-0109">Calcium transport</keyword>
<keyword id="KW-1003">Cell membrane</keyword>
<keyword id="KW-0407">Ion channel</keyword>
<keyword id="KW-0406">Ion transport</keyword>
<keyword id="KW-0472">Membrane</keyword>
<keyword id="KW-0597">Phosphoprotein</keyword>
<keyword id="KW-1185">Reference proteome</keyword>
<keyword id="KW-0728">SH3 domain</keyword>
<keyword id="KW-0813">Transport</keyword>
<keyword id="KW-0851">Voltage-gated channel</keyword>
<gene>
    <name type="primary">Cacnb2</name>
    <name type="synonym">Cacnlb2</name>
</gene>
<evidence type="ECO:0000250" key="1"/>
<evidence type="ECO:0000250" key="2">
    <source>
        <dbReference type="UniProtKB" id="Q08289"/>
    </source>
</evidence>
<evidence type="ECO:0000250" key="3">
    <source>
        <dbReference type="UniProtKB" id="Q8VGC3"/>
    </source>
</evidence>
<evidence type="ECO:0000255" key="4">
    <source>
        <dbReference type="PROSITE-ProRule" id="PRU00192"/>
    </source>
</evidence>
<evidence type="ECO:0000256" key="5">
    <source>
        <dbReference type="SAM" id="MobiDB-lite"/>
    </source>
</evidence>
<evidence type="ECO:0000269" key="6">
    <source>
    </source>
</evidence>
<evidence type="ECO:0000269" key="7">
    <source>
    </source>
</evidence>
<evidence type="ECO:0000269" key="8">
    <source>
    </source>
</evidence>
<evidence type="ECO:0000303" key="9">
    <source>
    </source>
</evidence>
<evidence type="ECO:0000305" key="10"/>
<evidence type="ECO:0007744" key="11">
    <source>
    </source>
</evidence>
<sequence length="655" mass="73149">MVQSDTSKSPPVAAVAQESQMELLESAAPAGALGAQSYGKGARRKNRFKGSDGSTSSDTTSNSFVRQGSADSYTSRPSDSDVSLEEDREAVRREAERQAQAQLEKAKTKPVAFAVRTNVRYSAAQEDDVPVPGMAISFEAKDFLHVKEKFNNDWWIGRLVKEGCEIGFIPSPVKLENMRLQHEQRAKQGKFYSSKSGGNSSSSLGDIVPSSRKSTPPSSAIDIDATGLDAEENDIPANHRSPKPSANSVTSPHSKEKRMPFFKKTEHTPPYDVVPSMRPVVLVGPSLKGYEVTDMMQKALFDFLKHRFEGRISITRVTADISLAKRSVLNNPSKHAIIERSNTRSSLAEVQSEIERIFELARTLQLVVLDADTINHPAQLSKTSLAPIIVYVKISSPKVLQRLIKSRGKSQAKHLNVQMVAADKLAQCPPQESFDVILDENQLEDACEHLADYLEAYWKATHPPSGNLPNPLLSRTLASSTLPLSPTLASNSQGSQGDQRPDRSAPRSASQAEEEPCLEPVKKSQHRSSSATHQNHRSGTGRGLSRQETFDSETQESRDSAYVEPKEDYSHEHVDRYVPHREHNHREETHSSNGHRHRESRHRSRDMGRDQDHNECIKQRSRHKSKDRYCDKEGEVISKRRNEAGEWNRDVYIRQ</sequence>
<organism>
    <name type="scientific">Mus musculus</name>
    <name type="common">Mouse</name>
    <dbReference type="NCBI Taxonomy" id="10090"/>
    <lineage>
        <taxon>Eukaryota</taxon>
        <taxon>Metazoa</taxon>
        <taxon>Chordata</taxon>
        <taxon>Craniata</taxon>
        <taxon>Vertebrata</taxon>
        <taxon>Euteleostomi</taxon>
        <taxon>Mammalia</taxon>
        <taxon>Eutheria</taxon>
        <taxon>Euarchontoglires</taxon>
        <taxon>Glires</taxon>
        <taxon>Rodentia</taxon>
        <taxon>Myomorpha</taxon>
        <taxon>Muroidea</taxon>
        <taxon>Muridae</taxon>
        <taxon>Murinae</taxon>
        <taxon>Mus</taxon>
        <taxon>Mus</taxon>
    </lineage>
</organism>
<proteinExistence type="evidence at protein level"/>
<dbReference type="EMBL" id="AB109465">
    <property type="protein sequence ID" value="BAD01474.1"/>
    <property type="molecule type" value="Genomic_DNA"/>
</dbReference>
<dbReference type="EMBL" id="AK020806">
    <property type="protein sequence ID" value="BAB32216.1"/>
    <property type="molecule type" value="mRNA"/>
</dbReference>
<dbReference type="EMBL" id="AK034054">
    <property type="protein sequence ID" value="BAC28562.1"/>
    <property type="molecule type" value="mRNA"/>
</dbReference>
<dbReference type="EMBL" id="AK078220">
    <property type="protein sequence ID" value="BAC37179.1"/>
    <property type="molecule type" value="mRNA"/>
</dbReference>
<dbReference type="EMBL" id="AL928632">
    <property type="status" value="NOT_ANNOTATED_CDS"/>
    <property type="molecule type" value="Genomic_DNA"/>
</dbReference>
<dbReference type="CCDS" id="CCDS15702.1">
    <molecule id="Q8CC27-1"/>
</dbReference>
<dbReference type="CCDS" id="CCDS84473.1">
    <molecule id="Q8CC27-3"/>
</dbReference>
<dbReference type="RefSeq" id="NP_001296448.1">
    <molecule id="Q8CC27-3"/>
    <property type="nucleotide sequence ID" value="NM_001309519.2"/>
</dbReference>
<dbReference type="RefSeq" id="NP_001393021.1">
    <molecule id="Q8CC27-2"/>
    <property type="nucleotide sequence ID" value="NM_001406092.1"/>
</dbReference>
<dbReference type="RefSeq" id="NP_075605.1">
    <molecule id="Q8CC27-1"/>
    <property type="nucleotide sequence ID" value="NM_023116.5"/>
</dbReference>
<dbReference type="RefSeq" id="XP_006497383.1">
    <property type="nucleotide sequence ID" value="XM_006497320.1"/>
</dbReference>
<dbReference type="SMR" id="Q8CC27"/>
<dbReference type="BioGRID" id="198440">
    <property type="interactions" value="11"/>
</dbReference>
<dbReference type="ComplexPortal" id="CPX-3194">
    <property type="entry name" value="Cav1.2 voltage-gated calcium channel complex, CACNA2D1-CACNB2 variant"/>
</dbReference>
<dbReference type="CORUM" id="Q8CC27"/>
<dbReference type="FunCoup" id="Q8CC27">
    <property type="interactions" value="936"/>
</dbReference>
<dbReference type="IntAct" id="Q8CC27">
    <property type="interactions" value="4"/>
</dbReference>
<dbReference type="STRING" id="10090.ENSMUSP00000110371"/>
<dbReference type="GlyGen" id="Q8CC27">
    <property type="glycosylation" value="1 site, 1 N-linked glycan (1 site)"/>
</dbReference>
<dbReference type="iPTMnet" id="Q8CC27"/>
<dbReference type="PhosphoSitePlus" id="Q8CC27"/>
<dbReference type="jPOST" id="Q8CC27"/>
<dbReference type="PaxDb" id="10090-ENSMUSP00000110371"/>
<dbReference type="ProteomicsDB" id="265484">
    <molecule id="Q8CC27-1"/>
</dbReference>
<dbReference type="ProteomicsDB" id="265485">
    <molecule id="Q8CC27-2"/>
</dbReference>
<dbReference type="ProteomicsDB" id="265486">
    <molecule id="Q8CC27-3"/>
</dbReference>
<dbReference type="ProteomicsDB" id="265487">
    <molecule id="Q8CC27-4"/>
</dbReference>
<dbReference type="ABCD" id="Q8CC27">
    <property type="antibodies" value="1 sequenced antibody"/>
</dbReference>
<dbReference type="Antibodypedia" id="12067">
    <property type="antibodies" value="569 antibodies from 34 providers"/>
</dbReference>
<dbReference type="DNASU" id="12296"/>
<dbReference type="Ensembl" id="ENSMUST00000114719.7">
    <molecule id="Q8CC27-3"/>
    <property type="protein sequence ID" value="ENSMUSP00000110367.2"/>
    <property type="gene ID" value="ENSMUSG00000057914.16"/>
</dbReference>
<dbReference type="Ensembl" id="ENSMUST00000114723.9">
    <molecule id="Q8CC27-1"/>
    <property type="protein sequence ID" value="ENSMUSP00000110371.3"/>
    <property type="gene ID" value="ENSMUSG00000057914.16"/>
</dbReference>
<dbReference type="GeneID" id="12296"/>
<dbReference type="KEGG" id="mmu:12296"/>
<dbReference type="UCSC" id="uc008ikm.2">
    <molecule id="Q8CC27-1"/>
    <property type="organism name" value="mouse"/>
</dbReference>
<dbReference type="UCSC" id="uc008iks.2">
    <molecule id="Q8CC27-3"/>
    <property type="organism name" value="mouse"/>
</dbReference>
<dbReference type="UCSC" id="uc056zla.1">
    <molecule id="Q8CC27-4"/>
    <property type="organism name" value="mouse"/>
</dbReference>
<dbReference type="AGR" id="MGI:894644"/>
<dbReference type="CTD" id="783"/>
<dbReference type="MGI" id="MGI:894644">
    <property type="gene designation" value="Cacnb2"/>
</dbReference>
<dbReference type="VEuPathDB" id="HostDB:ENSMUSG00000057914"/>
<dbReference type="eggNOG" id="KOG3812">
    <property type="taxonomic scope" value="Eukaryota"/>
</dbReference>
<dbReference type="GeneTree" id="ENSGT00950000182837"/>
<dbReference type="HOGENOM" id="CLU_021995_3_0_1"/>
<dbReference type="InParanoid" id="Q8CC27"/>
<dbReference type="OrthoDB" id="5962384at2759"/>
<dbReference type="PhylomeDB" id="Q8CC27"/>
<dbReference type="TreeFam" id="TF316195"/>
<dbReference type="Reactome" id="R-MMU-112308">
    <property type="pathway name" value="Presynaptic depolarization and calcium channel opening"/>
</dbReference>
<dbReference type="Reactome" id="R-MMU-422356">
    <property type="pathway name" value="Regulation of insulin secretion"/>
</dbReference>
<dbReference type="Reactome" id="R-MMU-5576892">
    <property type="pathway name" value="Phase 0 - rapid depolarisation"/>
</dbReference>
<dbReference type="Reactome" id="R-MMU-5576893">
    <property type="pathway name" value="Phase 2 - plateau phase"/>
</dbReference>
<dbReference type="BioGRID-ORCS" id="12296">
    <property type="hits" value="3 hits in 63 CRISPR screens"/>
</dbReference>
<dbReference type="ChiTaRS" id="Cacnb2">
    <property type="organism name" value="mouse"/>
</dbReference>
<dbReference type="PRO" id="PR:Q8CC27"/>
<dbReference type="Proteomes" id="UP000000589">
    <property type="component" value="Chromosome 2"/>
</dbReference>
<dbReference type="RNAct" id="Q8CC27">
    <property type="molecule type" value="protein"/>
</dbReference>
<dbReference type="Bgee" id="ENSMUSG00000057914">
    <property type="expression patterns" value="Expressed in retinal neural layer and 138 other cell types or tissues"/>
</dbReference>
<dbReference type="ExpressionAtlas" id="Q8CC27">
    <property type="expression patterns" value="baseline and differential"/>
</dbReference>
<dbReference type="GO" id="GO:1990454">
    <property type="term" value="C:L-type voltage-gated calcium channel complex"/>
    <property type="evidence" value="ECO:0000250"/>
    <property type="project" value="UniProtKB"/>
</dbReference>
<dbReference type="GO" id="GO:0098684">
    <property type="term" value="C:photoreceptor ribbon synapse"/>
    <property type="evidence" value="ECO:0000314"/>
    <property type="project" value="SynGO"/>
</dbReference>
<dbReference type="GO" id="GO:0005886">
    <property type="term" value="C:plasma membrane"/>
    <property type="evidence" value="ECO:0000304"/>
    <property type="project" value="Reactome"/>
</dbReference>
<dbReference type="GO" id="GO:0098793">
    <property type="term" value="C:presynapse"/>
    <property type="evidence" value="ECO:0007669"/>
    <property type="project" value="GOC"/>
</dbReference>
<dbReference type="GO" id="GO:0005891">
    <property type="term" value="C:voltage-gated calcium channel complex"/>
    <property type="evidence" value="ECO:0000314"/>
    <property type="project" value="MGI"/>
</dbReference>
<dbReference type="GO" id="GO:0051015">
    <property type="term" value="F:actin filament binding"/>
    <property type="evidence" value="ECO:0000314"/>
    <property type="project" value="BHF-UCL"/>
</dbReference>
<dbReference type="GO" id="GO:0008331">
    <property type="term" value="F:high voltage-gated calcium channel activity"/>
    <property type="evidence" value="ECO:0000304"/>
    <property type="project" value="MGI"/>
</dbReference>
<dbReference type="GO" id="GO:0086056">
    <property type="term" value="F:voltage-gated calcium channel activity involved in AV node cell action potential"/>
    <property type="evidence" value="ECO:0007669"/>
    <property type="project" value="Ensembl"/>
</dbReference>
<dbReference type="GO" id="GO:0099626">
    <property type="term" value="F:voltage-gated calcium channel activity involved in regulation of presynaptic cytosolic calcium levels"/>
    <property type="evidence" value="ECO:0000314"/>
    <property type="project" value="SynGO"/>
</dbReference>
<dbReference type="GO" id="GO:0070509">
    <property type="term" value="P:calcium ion import"/>
    <property type="evidence" value="ECO:0007669"/>
    <property type="project" value="Ensembl"/>
</dbReference>
<dbReference type="GO" id="GO:0070588">
    <property type="term" value="P:calcium ion transmembrane transport"/>
    <property type="evidence" value="ECO:0000250"/>
    <property type="project" value="ComplexPortal"/>
</dbReference>
<dbReference type="GO" id="GO:0007268">
    <property type="term" value="P:chemical synaptic transmission"/>
    <property type="evidence" value="ECO:0000315"/>
    <property type="project" value="MGI"/>
</dbReference>
<dbReference type="GO" id="GO:0098912">
    <property type="term" value="P:membrane depolarization during atrial cardiac muscle cell action potential"/>
    <property type="evidence" value="ECO:0000250"/>
    <property type="project" value="BHF-UCL"/>
</dbReference>
<dbReference type="GO" id="GO:0086045">
    <property type="term" value="P:membrane depolarization during AV node cell action potential"/>
    <property type="evidence" value="ECO:0000250"/>
    <property type="project" value="BHF-UCL"/>
</dbReference>
<dbReference type="GO" id="GO:1904879">
    <property type="term" value="P:positive regulation of calcium ion transmembrane transport via high voltage-gated calcium channel"/>
    <property type="evidence" value="ECO:0000250"/>
    <property type="project" value="BHF-UCL"/>
</dbReference>
<dbReference type="GO" id="GO:0045933">
    <property type="term" value="P:positive regulation of muscle contraction"/>
    <property type="evidence" value="ECO:0000303"/>
    <property type="project" value="ComplexPortal"/>
</dbReference>
<dbReference type="GO" id="GO:0072659">
    <property type="term" value="P:protein localization to plasma membrane"/>
    <property type="evidence" value="ECO:0000250"/>
    <property type="project" value="BHF-UCL"/>
</dbReference>
<dbReference type="GO" id="GO:0086091">
    <property type="term" value="P:regulation of heart rate by cardiac conduction"/>
    <property type="evidence" value="ECO:0000250"/>
    <property type="project" value="BHF-UCL"/>
</dbReference>
<dbReference type="GO" id="GO:0007601">
    <property type="term" value="P:visual perception"/>
    <property type="evidence" value="ECO:0000315"/>
    <property type="project" value="MGI"/>
</dbReference>
<dbReference type="CDD" id="cd12040">
    <property type="entry name" value="SH3_CACNB2"/>
    <property type="match status" value="1"/>
</dbReference>
<dbReference type="FunFam" id="2.30.30.40:FF:000015">
    <property type="entry name" value="Voltage-dependent L-type calcium channel subunit beta-2"/>
    <property type="match status" value="1"/>
</dbReference>
<dbReference type="FunFam" id="3.40.50.300:FF:000023">
    <property type="entry name" value="Voltage-dependent L-type calcium channel subunit beta-2"/>
    <property type="match status" value="1"/>
</dbReference>
<dbReference type="Gene3D" id="3.40.50.300">
    <property type="entry name" value="P-loop containing nucleotide triphosphate hydrolases"/>
    <property type="match status" value="1"/>
</dbReference>
<dbReference type="Gene3D" id="2.30.30.40">
    <property type="entry name" value="SH3 Domains"/>
    <property type="match status" value="1"/>
</dbReference>
<dbReference type="InterPro" id="IPR046937">
    <property type="entry name" value="CAB1-4_N_A-dom"/>
</dbReference>
<dbReference type="InterPro" id="IPR035605">
    <property type="entry name" value="CACNB2_SH3"/>
</dbReference>
<dbReference type="InterPro" id="IPR008145">
    <property type="entry name" value="GK/Ca_channel_bsu"/>
</dbReference>
<dbReference type="InterPro" id="IPR027417">
    <property type="entry name" value="P-loop_NTPase"/>
</dbReference>
<dbReference type="InterPro" id="IPR036028">
    <property type="entry name" value="SH3-like_dom_sf"/>
</dbReference>
<dbReference type="InterPro" id="IPR001452">
    <property type="entry name" value="SH3_domain"/>
</dbReference>
<dbReference type="InterPro" id="IPR005444">
    <property type="entry name" value="VDCC_L_b2su"/>
</dbReference>
<dbReference type="InterPro" id="IPR000584">
    <property type="entry name" value="VDCC_L_bsu"/>
</dbReference>
<dbReference type="PANTHER" id="PTHR11824">
    <property type="entry name" value="VOLTAGE-DEPENDENT CALCIUM CHANNEL BETA SUBUNIT"/>
    <property type="match status" value="1"/>
</dbReference>
<dbReference type="Pfam" id="PF00625">
    <property type="entry name" value="Guanylate_kin"/>
    <property type="match status" value="1"/>
</dbReference>
<dbReference type="Pfam" id="PF12052">
    <property type="entry name" value="VGCC_beta4Aa_N"/>
    <property type="match status" value="1"/>
</dbReference>
<dbReference type="PRINTS" id="PR01626">
    <property type="entry name" value="LCACHANNELB"/>
</dbReference>
<dbReference type="PRINTS" id="PR01628">
    <property type="entry name" value="LCACHANNELB2"/>
</dbReference>
<dbReference type="SMART" id="SM00072">
    <property type="entry name" value="GuKc"/>
    <property type="match status" value="1"/>
</dbReference>
<dbReference type="SUPFAM" id="SSF52540">
    <property type="entry name" value="P-loop containing nucleoside triphosphate hydrolases"/>
    <property type="match status" value="1"/>
</dbReference>
<dbReference type="SUPFAM" id="SSF50044">
    <property type="entry name" value="SH3-domain"/>
    <property type="match status" value="1"/>
</dbReference>
<dbReference type="PROSITE" id="PS50002">
    <property type="entry name" value="SH3"/>
    <property type="match status" value="1"/>
</dbReference>
<name>CACB2_MOUSE</name>